<accession>Q03X10</accession>
<dbReference type="EC" id="2.5.1.19" evidence="1"/>
<dbReference type="EMBL" id="CP000414">
    <property type="protein sequence ID" value="ABJ62262.1"/>
    <property type="molecule type" value="Genomic_DNA"/>
</dbReference>
<dbReference type="RefSeq" id="WP_011679898.1">
    <property type="nucleotide sequence ID" value="NC_008531.1"/>
</dbReference>
<dbReference type="SMR" id="Q03X10"/>
<dbReference type="EnsemblBacteria" id="ABJ62262">
    <property type="protein sequence ID" value="ABJ62262"/>
    <property type="gene ID" value="LEUM_1164"/>
</dbReference>
<dbReference type="GeneID" id="29577701"/>
<dbReference type="KEGG" id="lme:LEUM_1164"/>
<dbReference type="eggNOG" id="COG0128">
    <property type="taxonomic scope" value="Bacteria"/>
</dbReference>
<dbReference type="HOGENOM" id="CLU_024321_0_1_9"/>
<dbReference type="UniPathway" id="UPA00053">
    <property type="reaction ID" value="UER00089"/>
</dbReference>
<dbReference type="Proteomes" id="UP000000362">
    <property type="component" value="Chromosome"/>
</dbReference>
<dbReference type="GO" id="GO:0005737">
    <property type="term" value="C:cytoplasm"/>
    <property type="evidence" value="ECO:0007669"/>
    <property type="project" value="UniProtKB-SubCell"/>
</dbReference>
<dbReference type="GO" id="GO:0003866">
    <property type="term" value="F:3-phosphoshikimate 1-carboxyvinyltransferase activity"/>
    <property type="evidence" value="ECO:0007669"/>
    <property type="project" value="UniProtKB-UniRule"/>
</dbReference>
<dbReference type="GO" id="GO:0008652">
    <property type="term" value="P:amino acid biosynthetic process"/>
    <property type="evidence" value="ECO:0007669"/>
    <property type="project" value="UniProtKB-KW"/>
</dbReference>
<dbReference type="GO" id="GO:0009073">
    <property type="term" value="P:aromatic amino acid family biosynthetic process"/>
    <property type="evidence" value="ECO:0007669"/>
    <property type="project" value="UniProtKB-KW"/>
</dbReference>
<dbReference type="GO" id="GO:0009423">
    <property type="term" value="P:chorismate biosynthetic process"/>
    <property type="evidence" value="ECO:0007669"/>
    <property type="project" value="UniProtKB-UniRule"/>
</dbReference>
<dbReference type="CDD" id="cd01556">
    <property type="entry name" value="EPSP_synthase"/>
    <property type="match status" value="1"/>
</dbReference>
<dbReference type="FunFam" id="3.65.10.10:FF:000005">
    <property type="entry name" value="3-phosphoshikimate 1-carboxyvinyltransferase"/>
    <property type="match status" value="1"/>
</dbReference>
<dbReference type="Gene3D" id="3.65.10.10">
    <property type="entry name" value="Enolpyruvate transferase domain"/>
    <property type="match status" value="2"/>
</dbReference>
<dbReference type="HAMAP" id="MF_00210">
    <property type="entry name" value="EPSP_synth"/>
    <property type="match status" value="1"/>
</dbReference>
<dbReference type="InterPro" id="IPR001986">
    <property type="entry name" value="Enolpyruvate_Tfrase_dom"/>
</dbReference>
<dbReference type="InterPro" id="IPR036968">
    <property type="entry name" value="Enolpyruvate_Tfrase_sf"/>
</dbReference>
<dbReference type="InterPro" id="IPR006264">
    <property type="entry name" value="EPSP_synthase"/>
</dbReference>
<dbReference type="InterPro" id="IPR023193">
    <property type="entry name" value="EPSP_synthase_CS"/>
</dbReference>
<dbReference type="InterPro" id="IPR013792">
    <property type="entry name" value="RNA3'P_cycl/enolpyr_Trfase_a/b"/>
</dbReference>
<dbReference type="NCBIfam" id="TIGR01356">
    <property type="entry name" value="aroA"/>
    <property type="match status" value="1"/>
</dbReference>
<dbReference type="PANTHER" id="PTHR21090">
    <property type="entry name" value="AROM/DEHYDROQUINATE SYNTHASE"/>
    <property type="match status" value="1"/>
</dbReference>
<dbReference type="PANTHER" id="PTHR21090:SF5">
    <property type="entry name" value="PENTAFUNCTIONAL AROM POLYPEPTIDE"/>
    <property type="match status" value="1"/>
</dbReference>
<dbReference type="Pfam" id="PF00275">
    <property type="entry name" value="EPSP_synthase"/>
    <property type="match status" value="1"/>
</dbReference>
<dbReference type="PIRSF" id="PIRSF000505">
    <property type="entry name" value="EPSPS"/>
    <property type="match status" value="1"/>
</dbReference>
<dbReference type="SUPFAM" id="SSF55205">
    <property type="entry name" value="EPT/RTPC-like"/>
    <property type="match status" value="1"/>
</dbReference>
<dbReference type="PROSITE" id="PS00104">
    <property type="entry name" value="EPSP_SYNTHASE_1"/>
    <property type="match status" value="1"/>
</dbReference>
<dbReference type="PROSITE" id="PS00885">
    <property type="entry name" value="EPSP_SYNTHASE_2"/>
    <property type="match status" value="1"/>
</dbReference>
<proteinExistence type="inferred from homology"/>
<protein>
    <recommendedName>
        <fullName evidence="1">3-phosphoshikimate 1-carboxyvinyltransferase</fullName>
        <ecNumber evidence="1">2.5.1.19</ecNumber>
    </recommendedName>
    <alternativeName>
        <fullName evidence="1">5-enolpyruvylshikimate-3-phosphate synthase</fullName>
        <shortName evidence="1">EPSP synthase</shortName>
        <shortName evidence="1">EPSPS</shortName>
    </alternativeName>
</protein>
<comment type="function">
    <text evidence="1">Catalyzes the transfer of the enolpyruvyl moiety of phosphoenolpyruvate (PEP) to the 5-hydroxyl of shikimate-3-phosphate (S3P) to produce enolpyruvyl shikimate-3-phosphate and inorganic phosphate.</text>
</comment>
<comment type="catalytic activity">
    <reaction evidence="1">
        <text>3-phosphoshikimate + phosphoenolpyruvate = 5-O-(1-carboxyvinyl)-3-phosphoshikimate + phosphate</text>
        <dbReference type="Rhea" id="RHEA:21256"/>
        <dbReference type="ChEBI" id="CHEBI:43474"/>
        <dbReference type="ChEBI" id="CHEBI:57701"/>
        <dbReference type="ChEBI" id="CHEBI:58702"/>
        <dbReference type="ChEBI" id="CHEBI:145989"/>
        <dbReference type="EC" id="2.5.1.19"/>
    </reaction>
    <physiologicalReaction direction="left-to-right" evidence="1">
        <dbReference type="Rhea" id="RHEA:21257"/>
    </physiologicalReaction>
</comment>
<comment type="pathway">
    <text evidence="1">Metabolic intermediate biosynthesis; chorismate biosynthesis; chorismate from D-erythrose 4-phosphate and phosphoenolpyruvate: step 6/7.</text>
</comment>
<comment type="subunit">
    <text evidence="1">Monomer.</text>
</comment>
<comment type="subcellular location">
    <subcellularLocation>
        <location evidence="1">Cytoplasm</location>
    </subcellularLocation>
</comment>
<comment type="similarity">
    <text evidence="1">Belongs to the EPSP synthase family.</text>
</comment>
<gene>
    <name evidence="1" type="primary">aroA</name>
    <name type="ordered locus">LEUM_1164</name>
</gene>
<sequence length="434" mass="46309">MIKLTKAEKNGLHGEITVPGDKSISHRALMFGAIAEGKTVIDNFLMSDDVMHTMGVFRALGVEIDHTESQATVIGKGLTNFKAPSAGLDMGNSGTSTRLLMGLLSKQPFDLNIFGDSSLSKRPLRRVADPLSMMNAQFELSNDEFLPAVIKANTELNGITYHMPVASAQVKSAILLAGIQAEGETTIIEDLPSRDHTERMLRQFGGQIKTDNGVITVKKQSKLSGQHVLVPSDISSAAFFMVAGLITPNSEITIKKVGVNPTRDGVIKLLERMGAEITQKPIASDGEPLADITVKAQTLHGIAITAEDIPGAVDELPILALAATQAVGDTIISGAEELRVKETDRISTVISELTKLGADIDEKPDGMVIHGGTLLHTSNGSTLLDSHGDHRIGMMNVIASLITEGDVVLTGEEAMSVSYPGFVEDVSSIKREWL</sequence>
<keyword id="KW-0028">Amino-acid biosynthesis</keyword>
<keyword id="KW-0057">Aromatic amino acid biosynthesis</keyword>
<keyword id="KW-0963">Cytoplasm</keyword>
<keyword id="KW-1185">Reference proteome</keyword>
<keyword id="KW-0808">Transferase</keyword>
<organism>
    <name type="scientific">Leuconostoc mesenteroides subsp. mesenteroides (strain ATCC 8293 / DSM 20343 / BCRC 11652 / CCM 1803 / JCM 6124 / NCDO 523 / NBRC 100496 / NCIMB 8023 / NCTC 12954 / NRRL B-1118 / 37Y)</name>
    <dbReference type="NCBI Taxonomy" id="203120"/>
    <lineage>
        <taxon>Bacteria</taxon>
        <taxon>Bacillati</taxon>
        <taxon>Bacillota</taxon>
        <taxon>Bacilli</taxon>
        <taxon>Lactobacillales</taxon>
        <taxon>Lactobacillaceae</taxon>
        <taxon>Leuconostoc</taxon>
    </lineage>
</organism>
<reference key="1">
    <citation type="journal article" date="2006" name="Proc. Natl. Acad. Sci. U.S.A.">
        <title>Comparative genomics of the lactic acid bacteria.</title>
        <authorList>
            <person name="Makarova K.S."/>
            <person name="Slesarev A."/>
            <person name="Wolf Y.I."/>
            <person name="Sorokin A."/>
            <person name="Mirkin B."/>
            <person name="Koonin E.V."/>
            <person name="Pavlov A."/>
            <person name="Pavlova N."/>
            <person name="Karamychev V."/>
            <person name="Polouchine N."/>
            <person name="Shakhova V."/>
            <person name="Grigoriev I."/>
            <person name="Lou Y."/>
            <person name="Rohksar D."/>
            <person name="Lucas S."/>
            <person name="Huang K."/>
            <person name="Goodstein D.M."/>
            <person name="Hawkins T."/>
            <person name="Plengvidhya V."/>
            <person name="Welker D."/>
            <person name="Hughes J."/>
            <person name="Goh Y."/>
            <person name="Benson A."/>
            <person name="Baldwin K."/>
            <person name="Lee J.-H."/>
            <person name="Diaz-Muniz I."/>
            <person name="Dosti B."/>
            <person name="Smeianov V."/>
            <person name="Wechter W."/>
            <person name="Barabote R."/>
            <person name="Lorca G."/>
            <person name="Altermann E."/>
            <person name="Barrangou R."/>
            <person name="Ganesan B."/>
            <person name="Xie Y."/>
            <person name="Rawsthorne H."/>
            <person name="Tamir D."/>
            <person name="Parker C."/>
            <person name="Breidt F."/>
            <person name="Broadbent J.R."/>
            <person name="Hutkins R."/>
            <person name="O'Sullivan D."/>
            <person name="Steele J."/>
            <person name="Unlu G."/>
            <person name="Saier M.H. Jr."/>
            <person name="Klaenhammer T."/>
            <person name="Richardson P."/>
            <person name="Kozyavkin S."/>
            <person name="Weimer B.C."/>
            <person name="Mills D.A."/>
        </authorList>
    </citation>
    <scope>NUCLEOTIDE SEQUENCE [LARGE SCALE GENOMIC DNA]</scope>
    <source>
        <strain>ATCC 8293 / DSM 20343 / BCRC 11652 / CCM 1803 / JCM 6124 / NCDO 523 / NBRC 100496 / NCIMB 8023 / NCTC 12954 / NRRL B-1118 / 37Y</strain>
    </source>
</reference>
<feature type="chain" id="PRO_0000325358" description="3-phosphoshikimate 1-carboxyvinyltransferase">
    <location>
        <begin position="1"/>
        <end position="434"/>
    </location>
</feature>
<feature type="active site" description="Proton acceptor" evidence="1">
    <location>
        <position position="314"/>
    </location>
</feature>
<feature type="binding site" evidence="1">
    <location>
        <position position="22"/>
    </location>
    <ligand>
        <name>3-phosphoshikimate</name>
        <dbReference type="ChEBI" id="CHEBI:145989"/>
    </ligand>
</feature>
<feature type="binding site" evidence="1">
    <location>
        <position position="22"/>
    </location>
    <ligand>
        <name>phosphoenolpyruvate</name>
        <dbReference type="ChEBI" id="CHEBI:58702"/>
    </ligand>
</feature>
<feature type="binding site" evidence="1">
    <location>
        <position position="23"/>
    </location>
    <ligand>
        <name>3-phosphoshikimate</name>
        <dbReference type="ChEBI" id="CHEBI:145989"/>
    </ligand>
</feature>
<feature type="binding site" evidence="1">
    <location>
        <position position="27"/>
    </location>
    <ligand>
        <name>3-phosphoshikimate</name>
        <dbReference type="ChEBI" id="CHEBI:145989"/>
    </ligand>
</feature>
<feature type="binding site" evidence="1">
    <location>
        <position position="94"/>
    </location>
    <ligand>
        <name>phosphoenolpyruvate</name>
        <dbReference type="ChEBI" id="CHEBI:58702"/>
    </ligand>
</feature>
<feature type="binding site" evidence="1">
    <location>
        <position position="122"/>
    </location>
    <ligand>
        <name>phosphoenolpyruvate</name>
        <dbReference type="ChEBI" id="CHEBI:58702"/>
    </ligand>
</feature>
<feature type="binding site" evidence="1">
    <location>
        <position position="167"/>
    </location>
    <ligand>
        <name>3-phosphoshikimate</name>
        <dbReference type="ChEBI" id="CHEBI:145989"/>
    </ligand>
</feature>
<feature type="binding site" evidence="1">
    <location>
        <position position="169"/>
    </location>
    <ligand>
        <name>3-phosphoshikimate</name>
        <dbReference type="ChEBI" id="CHEBI:145989"/>
    </ligand>
</feature>
<feature type="binding site" evidence="1">
    <location>
        <position position="169"/>
    </location>
    <ligand>
        <name>phosphoenolpyruvate</name>
        <dbReference type="ChEBI" id="CHEBI:58702"/>
    </ligand>
</feature>
<feature type="binding site" evidence="1">
    <location>
        <position position="314"/>
    </location>
    <ligand>
        <name>3-phosphoshikimate</name>
        <dbReference type="ChEBI" id="CHEBI:145989"/>
    </ligand>
</feature>
<feature type="binding site" evidence="1">
    <location>
        <position position="341"/>
    </location>
    <ligand>
        <name>3-phosphoshikimate</name>
        <dbReference type="ChEBI" id="CHEBI:145989"/>
    </ligand>
</feature>
<feature type="binding site" evidence="1">
    <location>
        <position position="345"/>
    </location>
    <ligand>
        <name>phosphoenolpyruvate</name>
        <dbReference type="ChEBI" id="CHEBI:58702"/>
    </ligand>
</feature>
<feature type="binding site" evidence="1">
    <location>
        <position position="391"/>
    </location>
    <ligand>
        <name>phosphoenolpyruvate</name>
        <dbReference type="ChEBI" id="CHEBI:58702"/>
    </ligand>
</feature>
<evidence type="ECO:0000255" key="1">
    <source>
        <dbReference type="HAMAP-Rule" id="MF_00210"/>
    </source>
</evidence>
<name>AROA_LEUMM</name>